<reference key="1">
    <citation type="journal article" date="2010" name="J. Proteome Res.">
        <title>Molecular diversification of peptide toxins from the tarantula Haplopelma hainanum (Ornithoctonus hainana) venom based on transcriptomic, peptidomic, and genomic analyses.</title>
        <authorList>
            <person name="Tang X."/>
            <person name="Zhang Y."/>
            <person name="Hu W."/>
            <person name="Xu D."/>
            <person name="Tao H."/>
            <person name="Yang X."/>
            <person name="Li Y."/>
            <person name="Jiang L."/>
            <person name="Liang S."/>
        </authorList>
    </citation>
    <scope>NUCLEOTIDE SEQUENCE [LARGE SCALE MRNA]</scope>
    <scope>PROTEIN SEQUENCE OF 75-113</scope>
    <scope>IDENTIFICATION BY MASS SPECTROMETRY</scope>
    <source>
        <tissue>Venom</tissue>
        <tissue>Venom gland</tissue>
    </source>
</reference>
<name>H16A7_CYRHA</name>
<keyword id="KW-0903">Direct protein sequencing</keyword>
<keyword id="KW-1015">Disulfide bond</keyword>
<keyword id="KW-0872">Ion channel impairing toxin</keyword>
<keyword id="KW-0960">Knottin</keyword>
<keyword id="KW-0964">Secreted</keyword>
<keyword id="KW-0732">Signal</keyword>
<keyword id="KW-0800">Toxin</keyword>
<dbReference type="EMBL" id="GU292936">
    <property type="protein sequence ID" value="ADB56752.1"/>
    <property type="molecule type" value="mRNA"/>
</dbReference>
<dbReference type="ArachnoServer" id="AS001592">
    <property type="toxin name" value="U11-theraphotoxin-Hhn1a"/>
</dbReference>
<dbReference type="GO" id="GO:0005576">
    <property type="term" value="C:extracellular region"/>
    <property type="evidence" value="ECO:0007669"/>
    <property type="project" value="UniProtKB-SubCell"/>
</dbReference>
<dbReference type="GO" id="GO:0019871">
    <property type="term" value="F:sodium channel inhibitor activity"/>
    <property type="evidence" value="ECO:0007669"/>
    <property type="project" value="InterPro"/>
</dbReference>
<dbReference type="GO" id="GO:0090729">
    <property type="term" value="F:toxin activity"/>
    <property type="evidence" value="ECO:0007669"/>
    <property type="project" value="UniProtKB-KW"/>
</dbReference>
<dbReference type="InterPro" id="IPR012627">
    <property type="entry name" value="Toxin_22"/>
</dbReference>
<dbReference type="Pfam" id="PF08092">
    <property type="entry name" value="Toxin_22"/>
    <property type="match status" value="1"/>
</dbReference>
<feature type="signal peptide" evidence="2">
    <location>
        <begin position="1"/>
        <end position="21"/>
    </location>
</feature>
<feature type="propeptide" id="PRO_0000400869" evidence="3">
    <location>
        <begin position="22"/>
        <end position="74"/>
    </location>
</feature>
<feature type="peptide" id="PRO_0000400870" description="U11-theraphotoxin-Hhn1a">
    <location>
        <begin position="75"/>
        <end position="113"/>
    </location>
</feature>
<feature type="disulfide bond" evidence="1">
    <location>
        <begin position="75"/>
        <end position="90"/>
    </location>
</feature>
<feature type="disulfide bond" evidence="1">
    <location>
        <begin position="82"/>
        <end position="95"/>
    </location>
</feature>
<feature type="disulfide bond" evidence="1">
    <location>
        <begin position="89"/>
        <end position="110"/>
    </location>
</feature>
<accession>D2Y259</accession>
<protein>
    <recommendedName>
        <fullName>U11-theraphotoxin-Hhn1a</fullName>
        <shortName>U11-TRTX-Hhn1a</shortName>
    </recommendedName>
    <alternativeName>
        <fullName>Hainantoxin-XVI.7</fullName>
        <shortName>HNTX-XVI.7</shortName>
    </alternativeName>
    <alternativeName>
        <fullName>Peptide F4-19.87</fullName>
    </alternativeName>
</protein>
<sequence>MNTVRVTFLLVFVLAVSLGQADKDENRMEMQGKTEQGKSYLDFAENLLLQKLEELEAKLLEEDSEESRNSRQKRCIGEGVPCDENDPRCCSGLVCLKPTLHGIWYKSYYCYKK</sequence>
<organism>
    <name type="scientific">Cyriopagopus hainanus</name>
    <name type="common">Chinese bird spider</name>
    <name type="synonym">Haplopelma hainanum</name>
    <dbReference type="NCBI Taxonomy" id="209901"/>
    <lineage>
        <taxon>Eukaryota</taxon>
        <taxon>Metazoa</taxon>
        <taxon>Ecdysozoa</taxon>
        <taxon>Arthropoda</taxon>
        <taxon>Chelicerata</taxon>
        <taxon>Arachnida</taxon>
        <taxon>Araneae</taxon>
        <taxon>Mygalomorphae</taxon>
        <taxon>Theraphosidae</taxon>
        <taxon>Haplopelma</taxon>
    </lineage>
</organism>
<comment type="function">
    <text evidence="1">Probable ion channel inhibitor.</text>
</comment>
<comment type="subcellular location">
    <subcellularLocation>
        <location>Secreted</location>
    </subcellularLocation>
</comment>
<comment type="tissue specificity">
    <text>Expressed by the venom gland.</text>
</comment>
<comment type="domain">
    <text evidence="1">The presence of a 'disulfide through disulfide knot' structurally defines this protein as a knottin.</text>
</comment>
<comment type="similarity">
    <text evidence="4">Belongs to the neurotoxin 14 (magi-1) family. 01 (HNTX-16) subfamily.</text>
</comment>
<evidence type="ECO:0000250" key="1"/>
<evidence type="ECO:0000255" key="2"/>
<evidence type="ECO:0000269" key="3">
    <source>
    </source>
</evidence>
<evidence type="ECO:0000305" key="4"/>
<proteinExistence type="evidence at protein level"/>